<comment type="function">
    <text evidence="1">This protein is one of the two subunits of integration host factor, a specific DNA-binding protein that functions in genetic recombination as well as in transcriptional and translational control.</text>
</comment>
<comment type="subunit">
    <text evidence="1">Heterodimer of an alpha and a beta chain.</text>
</comment>
<comment type="similarity">
    <text evidence="1">Belongs to the bacterial histone-like protein family.</text>
</comment>
<name>IHFB_SHESM</name>
<proteinExistence type="inferred from homology"/>
<protein>
    <recommendedName>
        <fullName evidence="1">Integration host factor subunit beta</fullName>
        <shortName evidence="1">IHF-beta</shortName>
    </recommendedName>
</protein>
<gene>
    <name evidence="1" type="primary">ihfB</name>
    <name evidence="1" type="synonym">himD</name>
    <name type="ordered locus">Shewmr4_1925</name>
</gene>
<evidence type="ECO:0000255" key="1">
    <source>
        <dbReference type="HAMAP-Rule" id="MF_00381"/>
    </source>
</evidence>
<reference key="1">
    <citation type="submission" date="2006-08" db="EMBL/GenBank/DDBJ databases">
        <title>Complete sequence of Shewanella sp. MR-4.</title>
        <authorList>
            <consortium name="US DOE Joint Genome Institute"/>
            <person name="Copeland A."/>
            <person name="Lucas S."/>
            <person name="Lapidus A."/>
            <person name="Barry K."/>
            <person name="Detter J.C."/>
            <person name="Glavina del Rio T."/>
            <person name="Hammon N."/>
            <person name="Israni S."/>
            <person name="Dalin E."/>
            <person name="Tice H."/>
            <person name="Pitluck S."/>
            <person name="Kiss H."/>
            <person name="Brettin T."/>
            <person name="Bruce D."/>
            <person name="Han C."/>
            <person name="Tapia R."/>
            <person name="Gilna P."/>
            <person name="Schmutz J."/>
            <person name="Larimer F."/>
            <person name="Land M."/>
            <person name="Hauser L."/>
            <person name="Kyrpides N."/>
            <person name="Mikhailova N."/>
            <person name="Nealson K."/>
            <person name="Konstantinidis K."/>
            <person name="Klappenbach J."/>
            <person name="Tiedje J."/>
            <person name="Richardson P."/>
        </authorList>
    </citation>
    <scope>NUCLEOTIDE SEQUENCE [LARGE SCALE GENOMIC DNA]</scope>
    <source>
        <strain>MR-4</strain>
    </source>
</reference>
<organism>
    <name type="scientific">Shewanella sp. (strain MR-4)</name>
    <dbReference type="NCBI Taxonomy" id="60480"/>
    <lineage>
        <taxon>Bacteria</taxon>
        <taxon>Pseudomonadati</taxon>
        <taxon>Pseudomonadota</taxon>
        <taxon>Gammaproteobacteria</taxon>
        <taxon>Alteromonadales</taxon>
        <taxon>Shewanellaceae</taxon>
        <taxon>Shewanella</taxon>
    </lineage>
</organism>
<keyword id="KW-0233">DNA recombination</keyword>
<keyword id="KW-0238">DNA-binding</keyword>
<keyword id="KW-0804">Transcription</keyword>
<keyword id="KW-0805">Transcription regulation</keyword>
<keyword id="KW-0810">Translation regulation</keyword>
<dbReference type="EMBL" id="CP000446">
    <property type="protein sequence ID" value="ABI38999.1"/>
    <property type="molecule type" value="Genomic_DNA"/>
</dbReference>
<dbReference type="RefSeq" id="WP_011072380.1">
    <property type="nucleotide sequence ID" value="NC_008321.1"/>
</dbReference>
<dbReference type="SMR" id="Q0HIW8"/>
<dbReference type="GeneID" id="94727933"/>
<dbReference type="KEGG" id="she:Shewmr4_1925"/>
<dbReference type="HOGENOM" id="CLU_105066_2_0_6"/>
<dbReference type="GO" id="GO:0005694">
    <property type="term" value="C:chromosome"/>
    <property type="evidence" value="ECO:0007669"/>
    <property type="project" value="InterPro"/>
</dbReference>
<dbReference type="GO" id="GO:0005829">
    <property type="term" value="C:cytosol"/>
    <property type="evidence" value="ECO:0007669"/>
    <property type="project" value="TreeGrafter"/>
</dbReference>
<dbReference type="GO" id="GO:0003677">
    <property type="term" value="F:DNA binding"/>
    <property type="evidence" value="ECO:0007669"/>
    <property type="project" value="UniProtKB-UniRule"/>
</dbReference>
<dbReference type="GO" id="GO:0030527">
    <property type="term" value="F:structural constituent of chromatin"/>
    <property type="evidence" value="ECO:0007669"/>
    <property type="project" value="InterPro"/>
</dbReference>
<dbReference type="GO" id="GO:0006310">
    <property type="term" value="P:DNA recombination"/>
    <property type="evidence" value="ECO:0007669"/>
    <property type="project" value="UniProtKB-UniRule"/>
</dbReference>
<dbReference type="GO" id="GO:0006355">
    <property type="term" value="P:regulation of DNA-templated transcription"/>
    <property type="evidence" value="ECO:0007669"/>
    <property type="project" value="UniProtKB-UniRule"/>
</dbReference>
<dbReference type="GO" id="GO:0006417">
    <property type="term" value="P:regulation of translation"/>
    <property type="evidence" value="ECO:0007669"/>
    <property type="project" value="UniProtKB-UniRule"/>
</dbReference>
<dbReference type="CDD" id="cd13836">
    <property type="entry name" value="IHF_B"/>
    <property type="match status" value="1"/>
</dbReference>
<dbReference type="FunFam" id="4.10.520.10:FF:000003">
    <property type="entry name" value="Integration host factor subunit beta"/>
    <property type="match status" value="1"/>
</dbReference>
<dbReference type="Gene3D" id="4.10.520.10">
    <property type="entry name" value="IHF-like DNA-binding proteins"/>
    <property type="match status" value="1"/>
</dbReference>
<dbReference type="HAMAP" id="MF_00381">
    <property type="entry name" value="IHF_beta"/>
    <property type="match status" value="1"/>
</dbReference>
<dbReference type="InterPro" id="IPR000119">
    <property type="entry name" value="Hist_DNA-bd"/>
</dbReference>
<dbReference type="InterPro" id="IPR020816">
    <property type="entry name" value="Histone-like_DNA-bd_CS"/>
</dbReference>
<dbReference type="InterPro" id="IPR010992">
    <property type="entry name" value="IHF-like_DNA-bd_dom_sf"/>
</dbReference>
<dbReference type="InterPro" id="IPR005685">
    <property type="entry name" value="IHF_beta"/>
</dbReference>
<dbReference type="NCBIfam" id="TIGR00988">
    <property type="entry name" value="hip"/>
    <property type="match status" value="1"/>
</dbReference>
<dbReference type="NCBIfam" id="NF001222">
    <property type="entry name" value="PRK00199.1"/>
    <property type="match status" value="1"/>
</dbReference>
<dbReference type="PANTHER" id="PTHR33175">
    <property type="entry name" value="DNA-BINDING PROTEIN HU"/>
    <property type="match status" value="1"/>
</dbReference>
<dbReference type="PANTHER" id="PTHR33175:SF5">
    <property type="entry name" value="INTEGRATION HOST FACTOR SUBUNIT BETA"/>
    <property type="match status" value="1"/>
</dbReference>
<dbReference type="Pfam" id="PF00216">
    <property type="entry name" value="Bac_DNA_binding"/>
    <property type="match status" value="1"/>
</dbReference>
<dbReference type="PRINTS" id="PR01727">
    <property type="entry name" value="DNABINDINGHU"/>
</dbReference>
<dbReference type="SMART" id="SM00411">
    <property type="entry name" value="BHL"/>
    <property type="match status" value="1"/>
</dbReference>
<dbReference type="SUPFAM" id="SSF47729">
    <property type="entry name" value="IHF-like DNA-binding proteins"/>
    <property type="match status" value="1"/>
</dbReference>
<dbReference type="PROSITE" id="PS00045">
    <property type="entry name" value="HISTONE_LIKE"/>
    <property type="match status" value="1"/>
</dbReference>
<sequence length="95" mass="10648">MTKSELIEKLATRQSQLSAKEVEGAIKEMLEQMATTLESGDRIEIRGFGSFSLHYRAPRTGRNPKTGSSVELEGKYVPHFKPGKELRERVDAVNV</sequence>
<feature type="chain" id="PRO_1000060662" description="Integration host factor subunit beta">
    <location>
        <begin position="1"/>
        <end position="95"/>
    </location>
</feature>
<accession>Q0HIW8</accession>